<reference key="1">
    <citation type="submission" date="1998-08" db="EMBL/GenBank/DDBJ databases">
        <authorList>
            <person name="Kim S.I."/>
            <person name="Leem S.-H."/>
            <person name="Choi J.S."/>
            <person name="Chung Y.H."/>
            <person name="Kim S."/>
            <person name="Park Y.-M."/>
            <person name="Ha K.-S."/>
        </authorList>
    </citation>
    <scope>NUCLEOTIDE SEQUENCE [GENOMIC DNA]</scope>
    <source>
        <strain>K24</strain>
    </source>
</reference>
<reference key="2">
    <citation type="journal article" date="1997" name="J. Bacteriol.">
        <title>Cloning and characterization of two catA genes in Acinetobacter lwoffii K24.</title>
        <authorList>
            <person name="Kim S.I."/>
            <person name="Leem S.-H."/>
            <person name="Choi J.-S."/>
            <person name="Chung Y.H."/>
            <person name="Kim S."/>
            <person name="Park Y.-M."/>
            <person name="Park Y.K."/>
            <person name="Lee Y.N."/>
            <person name="Ha K.-S."/>
        </authorList>
    </citation>
    <scope>NUCLEOTIDE SEQUENCE [GENOMIC DNA] OF 153-385</scope>
    <source>
        <strain>K24</strain>
    </source>
</reference>
<dbReference type="EC" id="5.5.1.1" evidence="2"/>
<dbReference type="EMBL" id="U77659">
    <property type="protein sequence ID" value="AAC31766.1"/>
    <property type="molecule type" value="Genomic_DNA"/>
</dbReference>
<dbReference type="PIR" id="T46824">
    <property type="entry name" value="T46824"/>
</dbReference>
<dbReference type="SMR" id="O33949"/>
<dbReference type="UniPathway" id="UPA00157">
    <property type="reaction ID" value="UER00259"/>
</dbReference>
<dbReference type="GO" id="GO:0018850">
    <property type="term" value="F:chloromuconate cycloisomerase activity"/>
    <property type="evidence" value="ECO:0007669"/>
    <property type="project" value="InterPro"/>
</dbReference>
<dbReference type="GO" id="GO:0030145">
    <property type="term" value="F:manganese ion binding"/>
    <property type="evidence" value="ECO:0007669"/>
    <property type="project" value="InterPro"/>
</dbReference>
<dbReference type="GO" id="GO:0018849">
    <property type="term" value="F:muconate cycloisomerase activity"/>
    <property type="evidence" value="ECO:0007669"/>
    <property type="project" value="UniProtKB-EC"/>
</dbReference>
<dbReference type="GO" id="GO:0009063">
    <property type="term" value="P:amino acid catabolic process"/>
    <property type="evidence" value="ECO:0007669"/>
    <property type="project" value="InterPro"/>
</dbReference>
<dbReference type="GO" id="GO:0042952">
    <property type="term" value="P:beta-ketoadipate pathway"/>
    <property type="evidence" value="ECO:0007669"/>
    <property type="project" value="UniProtKB-UniPathway"/>
</dbReference>
<dbReference type="CDD" id="cd03318">
    <property type="entry name" value="MLE"/>
    <property type="match status" value="1"/>
</dbReference>
<dbReference type="Gene3D" id="3.20.20.120">
    <property type="entry name" value="Enolase-like C-terminal domain"/>
    <property type="match status" value="1"/>
</dbReference>
<dbReference type="Gene3D" id="3.30.390.10">
    <property type="entry name" value="Enolase-like, N-terminal domain"/>
    <property type="match status" value="1"/>
</dbReference>
<dbReference type="InterPro" id="IPR013370">
    <property type="entry name" value="Chloromuconate_cycloisomerase"/>
</dbReference>
<dbReference type="InterPro" id="IPR036849">
    <property type="entry name" value="Enolase-like_C_sf"/>
</dbReference>
<dbReference type="InterPro" id="IPR029017">
    <property type="entry name" value="Enolase-like_N"/>
</dbReference>
<dbReference type="InterPro" id="IPR029065">
    <property type="entry name" value="Enolase_C-like"/>
</dbReference>
<dbReference type="InterPro" id="IPR018110">
    <property type="entry name" value="Mandel_Rmase/mucon_lact_enz_CS"/>
</dbReference>
<dbReference type="InterPro" id="IPR013342">
    <property type="entry name" value="Mandelate_racemase_C"/>
</dbReference>
<dbReference type="InterPro" id="IPR013341">
    <property type="entry name" value="Mandelate_racemase_N_dom"/>
</dbReference>
<dbReference type="NCBIfam" id="TIGR02534">
    <property type="entry name" value="mucon_cyclo"/>
    <property type="match status" value="1"/>
</dbReference>
<dbReference type="PANTHER" id="PTHR48073:SF2">
    <property type="entry name" value="O-SUCCINYLBENZOATE SYNTHASE"/>
    <property type="match status" value="1"/>
</dbReference>
<dbReference type="PANTHER" id="PTHR48073">
    <property type="entry name" value="O-SUCCINYLBENZOATE SYNTHASE-RELATED"/>
    <property type="match status" value="1"/>
</dbReference>
<dbReference type="Pfam" id="PF13378">
    <property type="entry name" value="MR_MLE_C"/>
    <property type="match status" value="1"/>
</dbReference>
<dbReference type="Pfam" id="PF02746">
    <property type="entry name" value="MR_MLE_N"/>
    <property type="match status" value="1"/>
</dbReference>
<dbReference type="SFLD" id="SFLDG01258">
    <property type="entry name" value="(chloro)muconate_cycloisomeras"/>
    <property type="match status" value="1"/>
</dbReference>
<dbReference type="SFLD" id="SFLDG00180">
    <property type="entry name" value="muconate_cycloisomerase"/>
    <property type="match status" value="1"/>
</dbReference>
<dbReference type="SMART" id="SM00922">
    <property type="entry name" value="MR_MLE"/>
    <property type="match status" value="1"/>
</dbReference>
<dbReference type="SUPFAM" id="SSF51604">
    <property type="entry name" value="Enolase C-terminal domain-like"/>
    <property type="match status" value="1"/>
</dbReference>
<dbReference type="SUPFAM" id="SSF54826">
    <property type="entry name" value="Enolase N-terminal domain-like"/>
    <property type="match status" value="1"/>
</dbReference>
<dbReference type="PROSITE" id="PS00908">
    <property type="entry name" value="MR_MLE_1"/>
    <property type="match status" value="1"/>
</dbReference>
<dbReference type="PROSITE" id="PS00909">
    <property type="entry name" value="MR_MLE_2"/>
    <property type="match status" value="1"/>
</dbReference>
<organism>
    <name type="scientific">Acinetobacter lwoffii</name>
    <dbReference type="NCBI Taxonomy" id="28090"/>
    <lineage>
        <taxon>Bacteria</taxon>
        <taxon>Pseudomonadati</taxon>
        <taxon>Pseudomonadota</taxon>
        <taxon>Gammaproteobacteria</taxon>
        <taxon>Moraxellales</taxon>
        <taxon>Moraxellaceae</taxon>
        <taxon>Acinetobacter</taxon>
    </lineage>
</organism>
<sequence length="385" mass="41138">MIATPVKIESVETILVDVPTIRPHRLSVATMNCQTLVLVRIRCADGVVGVGEGTTIGGLAYGEESPESIKVNIDTYFAPLLKGLDATRPGAAMATLRGLFQGNRFARSAVETALFDAQAQRLGVPLSELFGGRIRDSVDVAWTLASGDTTRDIDEAERVFEAKRHRVFKLKIGSRALADDVAHVVAIQKALQGRGEVRVDVNQAWTESEAIWAGKRFADASVALIEQPIAAENRAGLKRLTDLAQVPIMADEALHGPADAFALASARAADVFAVKIAQSGGLSGAANVAAIALAANIDLYGGTMLEGAVGTIASAQLFSTFGELKWGTELFGPLLLTEEILTEPLRYENFVLHLPQGPGLGITLDWDKIDRLRRDTRKGASITMN</sequence>
<keyword id="KW-0058">Aromatic hydrocarbons catabolism</keyword>
<keyword id="KW-0413">Isomerase</keyword>
<keyword id="KW-0464">Manganese</keyword>
<keyword id="KW-0479">Metal-binding</keyword>
<gene>
    <name type="primary">catB2</name>
</gene>
<evidence type="ECO:0000250" key="1"/>
<evidence type="ECO:0000250" key="2">
    <source>
        <dbReference type="UniProtKB" id="P08310"/>
    </source>
</evidence>
<evidence type="ECO:0000305" key="3"/>
<feature type="chain" id="PRO_0000171250" description="Muconate cycloisomerase 1-2">
    <location>
        <begin position="1"/>
        <end position="385"/>
    </location>
</feature>
<feature type="active site" evidence="1">
    <location>
        <position position="171"/>
    </location>
</feature>
<feature type="binding site" evidence="1">
    <location>
        <position position="226"/>
    </location>
    <ligand>
        <name>Mn(2+)</name>
        <dbReference type="ChEBI" id="CHEBI:29035"/>
    </ligand>
</feature>
<feature type="binding site" evidence="1">
    <location>
        <position position="251"/>
    </location>
    <ligand>
        <name>Mn(2+)</name>
        <dbReference type="ChEBI" id="CHEBI:29035"/>
    </ligand>
</feature>
<comment type="function">
    <text>Catalyzes a syn cycloisomerization.</text>
</comment>
<comment type="catalytic activity">
    <reaction evidence="2">
        <text>(S)-muconolactone = cis,cis-muconate + H(+)</text>
        <dbReference type="Rhea" id="RHEA:30031"/>
        <dbReference type="ChEBI" id="CHEBI:15378"/>
        <dbReference type="ChEBI" id="CHEBI:32379"/>
        <dbReference type="ChEBI" id="CHEBI:58736"/>
        <dbReference type="EC" id="5.5.1.1"/>
    </reaction>
</comment>
<comment type="cofactor">
    <cofactor evidence="1">
        <name>Mn(2+)</name>
        <dbReference type="ChEBI" id="CHEBI:29035"/>
    </cofactor>
</comment>
<comment type="pathway">
    <text>Aromatic compound metabolism; beta-ketoadipate pathway; 5-oxo-4,5-dihydro-2-furylacetate from catechol: step 2/3.</text>
</comment>
<comment type="subunit">
    <text evidence="1">Homooctamer.</text>
</comment>
<comment type="similarity">
    <text evidence="3">Belongs to the mandelate racemase/muconate lactonizing enzyme family.</text>
</comment>
<protein>
    <recommendedName>
        <fullName>Muconate cycloisomerase 1-2</fullName>
        <ecNumber evidence="2">5.5.1.1</ecNumber>
    </recommendedName>
    <alternativeName>
        <fullName>Cis,cis-muconate lactonizing enzyme I 2</fullName>
        <shortName>MLE 2</shortName>
    </alternativeName>
    <alternativeName>
        <fullName>Muconate cycloisomerase I 2</fullName>
    </alternativeName>
</protein>
<accession>O33949</accession>
<proteinExistence type="inferred from homology"/>
<name>CATB2_ACILW</name>